<keyword id="KW-0030">Aminoacyl-tRNA synthetase</keyword>
<keyword id="KW-0067">ATP-binding</keyword>
<keyword id="KW-0963">Cytoplasm</keyword>
<keyword id="KW-0436">Ligase</keyword>
<keyword id="KW-0547">Nucleotide-binding</keyword>
<keyword id="KW-0648">Protein biosynthesis</keyword>
<keyword id="KW-1185">Reference proteome</keyword>
<sequence length="466" mass="51436">MAKGASISGFPEWLPAERVVEQRVIDTLREVFELNGFIGIETRAVEQGSSLLKKGETSKEIYLLSRLQEVGHESDIPVEQRLGLHFDLTVPLSRYVVEHSGALPFPFKRWQIQKVWRGERPQEGRFREFVQADIDVVGDGTLPSHYEVELPLVMVNALERLREFGLPKATVHANNRKLSEGFYRGLGLTDIEGVLREIDKLDKIGPQAVTDLLVETCGATEAQANACLELAQVTAEDGQELIEKFNGLCEIHHIPFDGDEYAMAKEGLDTLSMIIDEARRIRPGSVMADLKIARGLDYYTGSVYETFLEGASDLGSICSGGRYDNLATQGNRKYPGVGLSIGLSRLVSYMLHRAGATASRMSPACVLVAVWDEENRGDSNAIANTLRSRGIAADVAPTAAKLGKQIKYADKLGIPYVWFPNENPENDGSDEVKNIITGDQRPADAQSWQPDTVYAQQTVSINADNR</sequence>
<feature type="chain" id="PRO_1000199115" description="Histidine--tRNA ligase">
    <location>
        <begin position="1"/>
        <end position="466"/>
    </location>
</feature>
<proteinExistence type="inferred from homology"/>
<protein>
    <recommendedName>
        <fullName evidence="1">Histidine--tRNA ligase</fullName>
        <ecNumber evidence="1">6.1.1.21</ecNumber>
    </recommendedName>
    <alternativeName>
        <fullName evidence="1">Histidyl-tRNA synthetase</fullName>
        <shortName evidence="1">HisRS</shortName>
    </alternativeName>
</protein>
<comment type="catalytic activity">
    <reaction evidence="1">
        <text>tRNA(His) + L-histidine + ATP = L-histidyl-tRNA(His) + AMP + diphosphate + H(+)</text>
        <dbReference type="Rhea" id="RHEA:17313"/>
        <dbReference type="Rhea" id="RHEA-COMP:9665"/>
        <dbReference type="Rhea" id="RHEA-COMP:9689"/>
        <dbReference type="ChEBI" id="CHEBI:15378"/>
        <dbReference type="ChEBI" id="CHEBI:30616"/>
        <dbReference type="ChEBI" id="CHEBI:33019"/>
        <dbReference type="ChEBI" id="CHEBI:57595"/>
        <dbReference type="ChEBI" id="CHEBI:78442"/>
        <dbReference type="ChEBI" id="CHEBI:78527"/>
        <dbReference type="ChEBI" id="CHEBI:456215"/>
        <dbReference type="EC" id="6.1.1.21"/>
    </reaction>
</comment>
<comment type="subunit">
    <text evidence="1">Homodimer.</text>
</comment>
<comment type="subcellular location">
    <subcellularLocation>
        <location evidence="1">Cytoplasm</location>
    </subcellularLocation>
</comment>
<comment type="similarity">
    <text evidence="1">Belongs to the class-II aminoacyl-tRNA synthetase family.</text>
</comment>
<reference key="1">
    <citation type="journal article" date="2009" name="J. Bacteriol.">
        <title>Genome sequence of the probiotic bacterium Bifidobacterium animalis subsp. lactis AD011.</title>
        <authorList>
            <person name="Kim J.F."/>
            <person name="Jeong H."/>
            <person name="Yu D.S."/>
            <person name="Choi S.-H."/>
            <person name="Hur C.-G."/>
            <person name="Park M.-S."/>
            <person name="Yoon S.H."/>
            <person name="Kim D.-W."/>
            <person name="Ji G.E."/>
            <person name="Park H.-S."/>
            <person name="Oh T.K."/>
        </authorList>
    </citation>
    <scope>NUCLEOTIDE SEQUENCE [LARGE SCALE GENOMIC DNA]</scope>
    <source>
        <strain>AD011</strain>
    </source>
</reference>
<name>SYH_BIFA0</name>
<gene>
    <name evidence="1" type="primary">hisS</name>
    <name type="ordered locus">BLA_1195</name>
</gene>
<dbReference type="EC" id="6.1.1.21" evidence="1"/>
<dbReference type="EMBL" id="CP001213">
    <property type="protein sequence ID" value="ACL29483.1"/>
    <property type="molecule type" value="Genomic_DNA"/>
</dbReference>
<dbReference type="RefSeq" id="WP_012619961.1">
    <property type="nucleotide sequence ID" value="NC_011835.1"/>
</dbReference>
<dbReference type="SMR" id="B8DU04"/>
<dbReference type="STRING" id="442563.BLA_1195"/>
<dbReference type="GeneID" id="29696644"/>
<dbReference type="KEGG" id="bla:BLA_1195"/>
<dbReference type="HOGENOM" id="CLU_025113_3_0_11"/>
<dbReference type="Proteomes" id="UP000002456">
    <property type="component" value="Chromosome"/>
</dbReference>
<dbReference type="GO" id="GO:0005737">
    <property type="term" value="C:cytoplasm"/>
    <property type="evidence" value="ECO:0007669"/>
    <property type="project" value="UniProtKB-SubCell"/>
</dbReference>
<dbReference type="GO" id="GO:0005524">
    <property type="term" value="F:ATP binding"/>
    <property type="evidence" value="ECO:0007669"/>
    <property type="project" value="UniProtKB-UniRule"/>
</dbReference>
<dbReference type="GO" id="GO:0004821">
    <property type="term" value="F:histidine-tRNA ligase activity"/>
    <property type="evidence" value="ECO:0007669"/>
    <property type="project" value="UniProtKB-UniRule"/>
</dbReference>
<dbReference type="GO" id="GO:0006427">
    <property type="term" value="P:histidyl-tRNA aminoacylation"/>
    <property type="evidence" value="ECO:0007669"/>
    <property type="project" value="UniProtKB-UniRule"/>
</dbReference>
<dbReference type="CDD" id="cd00773">
    <property type="entry name" value="HisRS-like_core"/>
    <property type="match status" value="1"/>
</dbReference>
<dbReference type="Gene3D" id="3.40.50.800">
    <property type="entry name" value="Anticodon-binding domain"/>
    <property type="match status" value="1"/>
</dbReference>
<dbReference type="Gene3D" id="3.30.930.10">
    <property type="entry name" value="Bira Bifunctional Protein, Domain 2"/>
    <property type="match status" value="1"/>
</dbReference>
<dbReference type="HAMAP" id="MF_00127">
    <property type="entry name" value="His_tRNA_synth"/>
    <property type="match status" value="1"/>
</dbReference>
<dbReference type="InterPro" id="IPR006195">
    <property type="entry name" value="aa-tRNA-synth_II"/>
</dbReference>
<dbReference type="InterPro" id="IPR045864">
    <property type="entry name" value="aa-tRNA-synth_II/BPL/LPL"/>
</dbReference>
<dbReference type="InterPro" id="IPR004154">
    <property type="entry name" value="Anticodon-bd"/>
</dbReference>
<dbReference type="InterPro" id="IPR036621">
    <property type="entry name" value="Anticodon-bd_dom_sf"/>
</dbReference>
<dbReference type="InterPro" id="IPR015807">
    <property type="entry name" value="His-tRNA-ligase"/>
</dbReference>
<dbReference type="InterPro" id="IPR041715">
    <property type="entry name" value="HisRS-like_core"/>
</dbReference>
<dbReference type="InterPro" id="IPR004516">
    <property type="entry name" value="HisRS/HisZ"/>
</dbReference>
<dbReference type="NCBIfam" id="TIGR00442">
    <property type="entry name" value="hisS"/>
    <property type="match status" value="1"/>
</dbReference>
<dbReference type="PANTHER" id="PTHR11476:SF7">
    <property type="entry name" value="HISTIDINE--TRNA LIGASE"/>
    <property type="match status" value="1"/>
</dbReference>
<dbReference type="PANTHER" id="PTHR11476">
    <property type="entry name" value="HISTIDYL-TRNA SYNTHETASE"/>
    <property type="match status" value="1"/>
</dbReference>
<dbReference type="Pfam" id="PF03129">
    <property type="entry name" value="HGTP_anticodon"/>
    <property type="match status" value="1"/>
</dbReference>
<dbReference type="Pfam" id="PF13393">
    <property type="entry name" value="tRNA-synt_His"/>
    <property type="match status" value="1"/>
</dbReference>
<dbReference type="PIRSF" id="PIRSF001549">
    <property type="entry name" value="His-tRNA_synth"/>
    <property type="match status" value="1"/>
</dbReference>
<dbReference type="SUPFAM" id="SSF52954">
    <property type="entry name" value="Class II aaRS ABD-related"/>
    <property type="match status" value="1"/>
</dbReference>
<dbReference type="SUPFAM" id="SSF55681">
    <property type="entry name" value="Class II aaRS and biotin synthetases"/>
    <property type="match status" value="1"/>
</dbReference>
<dbReference type="PROSITE" id="PS50862">
    <property type="entry name" value="AA_TRNA_LIGASE_II"/>
    <property type="match status" value="1"/>
</dbReference>
<organism>
    <name type="scientific">Bifidobacterium animalis subsp. lactis (strain AD011)</name>
    <dbReference type="NCBI Taxonomy" id="442563"/>
    <lineage>
        <taxon>Bacteria</taxon>
        <taxon>Bacillati</taxon>
        <taxon>Actinomycetota</taxon>
        <taxon>Actinomycetes</taxon>
        <taxon>Bifidobacteriales</taxon>
        <taxon>Bifidobacteriaceae</taxon>
        <taxon>Bifidobacterium</taxon>
    </lineage>
</organism>
<accession>B8DU04</accession>
<evidence type="ECO:0000255" key="1">
    <source>
        <dbReference type="HAMAP-Rule" id="MF_00127"/>
    </source>
</evidence>